<organism>
    <name type="scientific">Sinorhizobium sp</name>
    <dbReference type="NCBI Taxonomy" id="42445"/>
    <lineage>
        <taxon>Bacteria</taxon>
        <taxon>Pseudomonadati</taxon>
        <taxon>Pseudomonadota</taxon>
        <taxon>Alphaproteobacteria</taxon>
        <taxon>Hyphomicrobiales</taxon>
        <taxon>Rhizobiaceae</taxon>
        <taxon>Sinorhizobium/Ensifer group</taxon>
        <taxon>Sinorhizobium</taxon>
    </lineage>
</organism>
<gene>
    <name type="primary">cobF</name>
</gene>
<accession>P21636</accession>
<comment type="function">
    <text>Catalyzes the methylation of C-1 in precorrin-5 and the subsequent extrusion of acetic acid from the resulting intermediate to form cobalt-precorrin-6A.</text>
</comment>
<comment type="catalytic activity">
    <reaction>
        <text>precorrin-5 + S-adenosyl-L-methionine + H2O = precorrin-6A + acetate + S-adenosyl-L-homocysteine + 2 H(+)</text>
        <dbReference type="Rhea" id="RHEA:18261"/>
        <dbReference type="ChEBI" id="CHEBI:15377"/>
        <dbReference type="ChEBI" id="CHEBI:15378"/>
        <dbReference type="ChEBI" id="CHEBI:30089"/>
        <dbReference type="ChEBI" id="CHEBI:57856"/>
        <dbReference type="ChEBI" id="CHEBI:59789"/>
        <dbReference type="ChEBI" id="CHEBI:77871"/>
        <dbReference type="ChEBI" id="CHEBI:77872"/>
        <dbReference type="EC" id="2.1.1.152"/>
    </reaction>
</comment>
<comment type="pathway">
    <text>Cofactor biosynthesis; adenosylcobalamin biosynthesis; cob(II)yrinate a,c-diamide from precorrin-2 (aerobic route): step 5/10.</text>
</comment>
<comment type="caution">
    <text evidence="1">Was originally thought to originate from Pseudomonas denitrificans, but similarity searches show that the sequence is much closer to Sinorhizobium. The entry's taxonomy has been changed.</text>
</comment>
<protein>
    <recommendedName>
        <fullName>Precorrin-6A synthase [deacetylating]</fullName>
        <ecNumber>2.1.1.152</ecNumber>
    </recommendedName>
</protein>
<reference key="1">
    <citation type="journal article" date="1990" name="J. Bacteriol.">
        <title>Genetic and sequence analysis of an 8.7-kilobase Pseudomonas denitrificans fragment carrying eight genes involved in transformation of precorrin-2 to cobyrinic acid.</title>
        <authorList>
            <person name="Crouzet J."/>
            <person name="Cameron B."/>
            <person name="Cauchois L."/>
            <person name="Rigault S."/>
            <person name="Rouyez M.-C."/>
            <person name="Blanche F."/>
            <person name="Thibaut D."/>
            <person name="Debussche L."/>
        </authorList>
    </citation>
    <scope>NUCLEOTIDE SEQUENCE [GENOMIC DNA]</scope>
    <source>
        <strain>SC510</strain>
    </source>
</reference>
<evidence type="ECO:0000305" key="1"/>
<feature type="chain" id="PRO_0000150400" description="Precorrin-6A synthase [deacetylating]">
    <location>
        <begin position="1"/>
        <end position="261"/>
    </location>
</feature>
<sequence>MAEAGMRKILIIGIGSGNPEHMTVQAINALNCADVLFIPTKGAKKTELAEVRRDICARYVTRKDSRTVEFAVPVRRTEGVSYDGSVDDWHAQIAGIYEALLSKELGEEGTGAFLVWGDPMLYDSTIRIVERVKARGEVAFAYDVIPGITSLQALCASHRIPLNLVGKPVEITTGRRLHESFPEKSQTSVVMLDGEQAFQRVEDPEAEIYWGAYLGTRDEIVISGRVAEVKDRILETRAAARAKMGWIMDIYLLRKGADFDE</sequence>
<keyword id="KW-0169">Cobalamin biosynthesis</keyword>
<keyword id="KW-0489">Methyltransferase</keyword>
<keyword id="KW-0949">S-adenosyl-L-methionine</keyword>
<keyword id="KW-0808">Transferase</keyword>
<proteinExistence type="predicted"/>
<dbReference type="EC" id="2.1.1.152"/>
<dbReference type="EMBL" id="M59301">
    <property type="protein sequence ID" value="AAA25794.1"/>
    <property type="molecule type" value="Genomic_DNA"/>
</dbReference>
<dbReference type="SMR" id="P21636"/>
<dbReference type="BioCyc" id="MetaCyc:MONOMER-87"/>
<dbReference type="UniPathway" id="UPA00148">
    <property type="reaction ID" value="UER00216"/>
</dbReference>
<dbReference type="GO" id="GO:0043819">
    <property type="term" value="F:precorrin-6A synthase (deacetylating) activity"/>
    <property type="evidence" value="ECO:0007669"/>
    <property type="project" value="UniProtKB-EC"/>
</dbReference>
<dbReference type="GO" id="GO:0009236">
    <property type="term" value="P:cobalamin biosynthetic process"/>
    <property type="evidence" value="ECO:0007669"/>
    <property type="project" value="UniProtKB-UniPathway"/>
</dbReference>
<dbReference type="GO" id="GO:0032259">
    <property type="term" value="P:methylation"/>
    <property type="evidence" value="ECO:0007669"/>
    <property type="project" value="UniProtKB-KW"/>
</dbReference>
<dbReference type="CDD" id="cd11643">
    <property type="entry name" value="Precorrin-6A-synthase"/>
    <property type="match status" value="1"/>
</dbReference>
<dbReference type="Gene3D" id="3.40.1010.10">
    <property type="entry name" value="Cobalt-precorrin-4 Transmethylase, Domain 1"/>
    <property type="match status" value="1"/>
</dbReference>
<dbReference type="Gene3D" id="3.30.950.10">
    <property type="entry name" value="Methyltransferase, Cobalt-precorrin-4 Transmethylase, Domain 2"/>
    <property type="match status" value="1"/>
</dbReference>
<dbReference type="InterPro" id="IPR000878">
    <property type="entry name" value="4pyrrol_Mease"/>
</dbReference>
<dbReference type="InterPro" id="IPR035996">
    <property type="entry name" value="4pyrrol_Methylase_sf"/>
</dbReference>
<dbReference type="InterPro" id="IPR014777">
    <property type="entry name" value="4pyrrole_Mease_sub1"/>
</dbReference>
<dbReference type="InterPro" id="IPR014776">
    <property type="entry name" value="4pyrrole_Mease_sub2"/>
</dbReference>
<dbReference type="InterPro" id="IPR012797">
    <property type="entry name" value="CobF"/>
</dbReference>
<dbReference type="NCBIfam" id="TIGR02434">
    <property type="entry name" value="CobF"/>
    <property type="match status" value="1"/>
</dbReference>
<dbReference type="PANTHER" id="PTHR43467">
    <property type="entry name" value="COBALT-PRECORRIN-2 C(20)-METHYLTRANSFERASE"/>
    <property type="match status" value="1"/>
</dbReference>
<dbReference type="PANTHER" id="PTHR43467:SF1">
    <property type="entry name" value="PRECORRIN-6A SYNTHASE [DEACETYLATING]"/>
    <property type="match status" value="1"/>
</dbReference>
<dbReference type="Pfam" id="PF00590">
    <property type="entry name" value="TP_methylase"/>
    <property type="match status" value="1"/>
</dbReference>
<dbReference type="PIRSF" id="PIRSF036525">
    <property type="entry name" value="CobF"/>
    <property type="match status" value="1"/>
</dbReference>
<dbReference type="SUPFAM" id="SSF53790">
    <property type="entry name" value="Tetrapyrrole methylase"/>
    <property type="match status" value="1"/>
</dbReference>
<name>COBF_SINSX</name>